<dbReference type="EC" id="6.3.4.-" evidence="1"/>
<dbReference type="EMBL" id="AE014074">
    <property type="protein sequence ID" value="AAM78837.1"/>
    <property type="molecule type" value="Genomic_DNA"/>
</dbReference>
<dbReference type="RefSeq" id="WP_002991082.1">
    <property type="nucleotide sequence ID" value="NC_004070.1"/>
</dbReference>
<dbReference type="SMR" id="P0DH16"/>
<dbReference type="KEGG" id="spg:SpyM3_0230"/>
<dbReference type="HOGENOM" id="CLU_038915_0_2_9"/>
<dbReference type="Proteomes" id="UP000000564">
    <property type="component" value="Chromosome"/>
</dbReference>
<dbReference type="GO" id="GO:0005737">
    <property type="term" value="C:cytoplasm"/>
    <property type="evidence" value="ECO:0007669"/>
    <property type="project" value="UniProtKB-SubCell"/>
</dbReference>
<dbReference type="GO" id="GO:0005524">
    <property type="term" value="F:ATP binding"/>
    <property type="evidence" value="ECO:0007669"/>
    <property type="project" value="UniProtKB-KW"/>
</dbReference>
<dbReference type="GO" id="GO:0016879">
    <property type="term" value="F:ligase activity, forming carbon-nitrogen bonds"/>
    <property type="evidence" value="ECO:0007669"/>
    <property type="project" value="UniProtKB-UniRule"/>
</dbReference>
<dbReference type="GO" id="GO:0000049">
    <property type="term" value="F:tRNA binding"/>
    <property type="evidence" value="ECO:0007669"/>
    <property type="project" value="UniProtKB-KW"/>
</dbReference>
<dbReference type="GO" id="GO:0006400">
    <property type="term" value="P:tRNA modification"/>
    <property type="evidence" value="ECO:0007669"/>
    <property type="project" value="UniProtKB-UniRule"/>
</dbReference>
<dbReference type="Gene3D" id="3.40.50.620">
    <property type="entry name" value="HUPs"/>
    <property type="match status" value="1"/>
</dbReference>
<dbReference type="HAMAP" id="MF_01539">
    <property type="entry name" value="TmcAL"/>
    <property type="match status" value="1"/>
</dbReference>
<dbReference type="InterPro" id="IPR014729">
    <property type="entry name" value="Rossmann-like_a/b/a_fold"/>
</dbReference>
<dbReference type="InterPro" id="IPR008513">
    <property type="entry name" value="tRNA(Met)_cyd_acetate_ligase"/>
</dbReference>
<dbReference type="NCBIfam" id="NF010191">
    <property type="entry name" value="PRK13670.1"/>
    <property type="match status" value="1"/>
</dbReference>
<dbReference type="PANTHER" id="PTHR37825">
    <property type="entry name" value="TRNA(MET) CYTIDINE ACETATE LIGASE"/>
    <property type="match status" value="1"/>
</dbReference>
<dbReference type="PANTHER" id="PTHR37825:SF1">
    <property type="entry name" value="TRNA(MET) CYTIDINE ACETATE LIGASE"/>
    <property type="match status" value="1"/>
</dbReference>
<dbReference type="Pfam" id="PF05636">
    <property type="entry name" value="HIGH_NTase1"/>
    <property type="match status" value="1"/>
</dbReference>
<dbReference type="SUPFAM" id="SSF52374">
    <property type="entry name" value="Nucleotidylyl transferase"/>
    <property type="match status" value="1"/>
</dbReference>
<proteinExistence type="inferred from homology"/>
<organism>
    <name type="scientific">Streptococcus pyogenes serotype M3 (strain ATCC BAA-595 / MGAS315)</name>
    <dbReference type="NCBI Taxonomy" id="198466"/>
    <lineage>
        <taxon>Bacteria</taxon>
        <taxon>Bacillati</taxon>
        <taxon>Bacillota</taxon>
        <taxon>Bacilli</taxon>
        <taxon>Lactobacillales</taxon>
        <taxon>Streptococcaceae</taxon>
        <taxon>Streptococcus</taxon>
    </lineage>
</organism>
<keyword id="KW-0067">ATP-binding</keyword>
<keyword id="KW-0963">Cytoplasm</keyword>
<keyword id="KW-0436">Ligase</keyword>
<keyword id="KW-0547">Nucleotide-binding</keyword>
<keyword id="KW-0694">RNA-binding</keyword>
<keyword id="KW-0819">tRNA processing</keyword>
<keyword id="KW-0820">tRNA-binding</keyword>
<comment type="function">
    <text evidence="1">Catalyzes the formation of N(4)-acetylcytidine (ac(4)C) at the wobble position of elongator tRNA(Met), using acetate and ATP as substrates. First activates an acetate ion to form acetyladenylate (Ac-AMP) and then transfers the acetyl group to tRNA to form ac(4)C34.</text>
</comment>
<comment type="catalytic activity">
    <reaction evidence="1">
        <text>cytidine(34) in elongator tRNA(Met) + acetate + ATP = N(4)-acetylcytidine(34) in elongator tRNA(Met) + AMP + diphosphate</text>
        <dbReference type="Rhea" id="RHEA:58144"/>
        <dbReference type="Rhea" id="RHEA-COMP:10693"/>
        <dbReference type="Rhea" id="RHEA-COMP:10694"/>
        <dbReference type="ChEBI" id="CHEBI:30089"/>
        <dbReference type="ChEBI" id="CHEBI:30616"/>
        <dbReference type="ChEBI" id="CHEBI:33019"/>
        <dbReference type="ChEBI" id="CHEBI:74900"/>
        <dbReference type="ChEBI" id="CHEBI:82748"/>
        <dbReference type="ChEBI" id="CHEBI:456215"/>
    </reaction>
</comment>
<comment type="subcellular location">
    <subcellularLocation>
        <location evidence="1">Cytoplasm</location>
    </subcellularLocation>
</comment>
<comment type="similarity">
    <text evidence="1">Belongs to the TmcAL family.</text>
</comment>
<evidence type="ECO:0000255" key="1">
    <source>
        <dbReference type="HAMAP-Rule" id="MF_01539"/>
    </source>
</evidence>
<accession>P0DH16</accession>
<accession>Q7CFG3</accession>
<accession>Q8P2K9</accession>
<protein>
    <recommendedName>
        <fullName evidence="1">tRNA(Met) cytidine acetate ligase</fullName>
        <ecNumber evidence="1">6.3.4.-</ecNumber>
    </recommendedName>
</protein>
<sequence>MTVTGIIAEFNPFHNGHKYLLETAEGLKIIAMSGNFMQRGEPALIDKWIRSEMALKNGADIVVELPFFVSVQSADYFAQGAIDILCQLGIQQLAFGTENVIDYQKLIKVYEKKSEQMTAYLSTLEDTLSYPQKTQKMWEIFAGVKFSGQTPNHILGLSYAKASAGKHIQLCPIKRQGAAYHSKDKNHLLASASAIRQHLNDWDFISHSVPNAGLLINNPHMSWDHYFSFLKYQILNHSDLTSIFQVNDELASRIKKAIKVSQNIDHLVDTVATKRYTKARVRRILTYILVNAKEPTLPKGIHILGFTSKGQAHLKKLKKSRPLITRIGAETWDEMTQKADSIYQLGHQDIPEQSFGRIPIIIKNERLN</sequence>
<feature type="chain" id="PRO_0000147192" description="tRNA(Met) cytidine acetate ligase">
    <location>
        <begin position="1"/>
        <end position="368"/>
    </location>
</feature>
<feature type="binding site" evidence="1">
    <location>
        <begin position="7"/>
        <end position="20"/>
    </location>
    <ligand>
        <name>ATP</name>
        <dbReference type="ChEBI" id="CHEBI:30616"/>
    </ligand>
</feature>
<feature type="binding site" evidence="1">
    <location>
        <position position="96"/>
    </location>
    <ligand>
        <name>ATP</name>
        <dbReference type="ChEBI" id="CHEBI:30616"/>
    </ligand>
</feature>
<feature type="binding site" evidence="1">
    <location>
        <position position="152"/>
    </location>
    <ligand>
        <name>ATP</name>
        <dbReference type="ChEBI" id="CHEBI:30616"/>
    </ligand>
</feature>
<feature type="binding site" evidence="1">
    <location>
        <position position="175"/>
    </location>
    <ligand>
        <name>ATP</name>
        <dbReference type="ChEBI" id="CHEBI:30616"/>
    </ligand>
</feature>
<name>TMCAL_STRP3</name>
<gene>
    <name evidence="1" type="primary">tmcAL</name>
    <name type="ordered locus">SpyM3_0230</name>
</gene>
<reference key="1">
    <citation type="journal article" date="2002" name="Proc. Natl. Acad. Sci. U.S.A.">
        <title>Genome sequence of a serotype M3 strain of group A Streptococcus: phage-encoded toxins, the high-virulence phenotype, and clone emergence.</title>
        <authorList>
            <person name="Beres S.B."/>
            <person name="Sylva G.L."/>
            <person name="Barbian K.D."/>
            <person name="Lei B."/>
            <person name="Hoff J.S."/>
            <person name="Mammarella N.D."/>
            <person name="Liu M.-Y."/>
            <person name="Smoot J.C."/>
            <person name="Porcella S.F."/>
            <person name="Parkins L.D."/>
            <person name="Campbell D.S."/>
            <person name="Smith T.M."/>
            <person name="McCormick J.K."/>
            <person name="Leung D.Y.M."/>
            <person name="Schlievert P.M."/>
            <person name="Musser J.M."/>
        </authorList>
    </citation>
    <scope>NUCLEOTIDE SEQUENCE [LARGE SCALE GENOMIC DNA]</scope>
    <source>
        <strain>ATCC BAA-595 / MGAS315</strain>
    </source>
</reference>